<reference key="1">
    <citation type="journal article" date="2009" name="Proc. Natl. Acad. Sci. U.S.A.">
        <title>The genomic basis of trophic strategy in marine bacteria.</title>
        <authorList>
            <person name="Lauro F.M."/>
            <person name="McDougald D."/>
            <person name="Thomas T."/>
            <person name="Williams T.J."/>
            <person name="Egan S."/>
            <person name="Rice S."/>
            <person name="DeMaere M.Z."/>
            <person name="Ting L."/>
            <person name="Ertan H."/>
            <person name="Johnson J."/>
            <person name="Ferriera S."/>
            <person name="Lapidus A."/>
            <person name="Anderson I."/>
            <person name="Kyrpides N."/>
            <person name="Munk A.C."/>
            <person name="Detter C."/>
            <person name="Han C.S."/>
            <person name="Brown M.V."/>
            <person name="Robb F.T."/>
            <person name="Kjelleberg S."/>
            <person name="Cavicchioli R."/>
        </authorList>
    </citation>
    <scope>NUCLEOTIDE SEQUENCE [LARGE SCALE GENOMIC DNA]</scope>
    <source>
        <strain>DSM 13593 / LMG 18877 / RB2256</strain>
    </source>
</reference>
<organism>
    <name type="scientific">Sphingopyxis alaskensis (strain DSM 13593 / LMG 18877 / RB2256)</name>
    <name type="common">Sphingomonas alaskensis</name>
    <dbReference type="NCBI Taxonomy" id="317655"/>
    <lineage>
        <taxon>Bacteria</taxon>
        <taxon>Pseudomonadati</taxon>
        <taxon>Pseudomonadota</taxon>
        <taxon>Alphaproteobacteria</taxon>
        <taxon>Sphingomonadales</taxon>
        <taxon>Sphingomonadaceae</taxon>
        <taxon>Sphingopyxis</taxon>
    </lineage>
</organism>
<dbReference type="EC" id="6.3.2.6" evidence="1"/>
<dbReference type="EMBL" id="CP000356">
    <property type="protein sequence ID" value="ABF52305.1"/>
    <property type="molecule type" value="Genomic_DNA"/>
</dbReference>
<dbReference type="RefSeq" id="WP_011540895.1">
    <property type="nucleotide sequence ID" value="NC_008048.1"/>
</dbReference>
<dbReference type="SMR" id="Q1GVL7"/>
<dbReference type="STRING" id="317655.Sala_0584"/>
<dbReference type="KEGG" id="sal:Sala_0584"/>
<dbReference type="eggNOG" id="COG0152">
    <property type="taxonomic scope" value="Bacteria"/>
</dbReference>
<dbReference type="HOGENOM" id="CLU_061495_2_0_5"/>
<dbReference type="OrthoDB" id="9801549at2"/>
<dbReference type="UniPathway" id="UPA00074">
    <property type="reaction ID" value="UER00131"/>
</dbReference>
<dbReference type="Proteomes" id="UP000006578">
    <property type="component" value="Chromosome"/>
</dbReference>
<dbReference type="GO" id="GO:0005829">
    <property type="term" value="C:cytosol"/>
    <property type="evidence" value="ECO:0007669"/>
    <property type="project" value="TreeGrafter"/>
</dbReference>
<dbReference type="GO" id="GO:0005524">
    <property type="term" value="F:ATP binding"/>
    <property type="evidence" value="ECO:0007669"/>
    <property type="project" value="UniProtKB-KW"/>
</dbReference>
<dbReference type="GO" id="GO:0004639">
    <property type="term" value="F:phosphoribosylaminoimidazolesuccinocarboxamide synthase activity"/>
    <property type="evidence" value="ECO:0007669"/>
    <property type="project" value="UniProtKB-UniRule"/>
</dbReference>
<dbReference type="GO" id="GO:0006189">
    <property type="term" value="P:'de novo' IMP biosynthetic process"/>
    <property type="evidence" value="ECO:0007669"/>
    <property type="project" value="UniProtKB-UniRule"/>
</dbReference>
<dbReference type="GO" id="GO:0009236">
    <property type="term" value="P:cobalamin biosynthetic process"/>
    <property type="evidence" value="ECO:0007669"/>
    <property type="project" value="InterPro"/>
</dbReference>
<dbReference type="CDD" id="cd01415">
    <property type="entry name" value="SAICAR_synt_PurC"/>
    <property type="match status" value="1"/>
</dbReference>
<dbReference type="FunFam" id="3.30.470.20:FF:000006">
    <property type="entry name" value="Phosphoribosylaminoimidazole-succinocarboxamide synthase"/>
    <property type="match status" value="1"/>
</dbReference>
<dbReference type="Gene3D" id="3.30.470.20">
    <property type="entry name" value="ATP-grasp fold, B domain"/>
    <property type="match status" value="1"/>
</dbReference>
<dbReference type="Gene3D" id="3.30.200.20">
    <property type="entry name" value="Phosphorylase Kinase, domain 1"/>
    <property type="match status" value="1"/>
</dbReference>
<dbReference type="HAMAP" id="MF_00137">
    <property type="entry name" value="SAICAR_synth"/>
    <property type="match status" value="1"/>
</dbReference>
<dbReference type="InterPro" id="IPR028923">
    <property type="entry name" value="SAICAR_synt/ADE2_N"/>
</dbReference>
<dbReference type="InterPro" id="IPR033934">
    <property type="entry name" value="SAICAR_synt_PurC"/>
</dbReference>
<dbReference type="InterPro" id="IPR001636">
    <property type="entry name" value="SAICAR_synth"/>
</dbReference>
<dbReference type="InterPro" id="IPR050089">
    <property type="entry name" value="SAICAR_synthetase"/>
</dbReference>
<dbReference type="InterPro" id="IPR018236">
    <property type="entry name" value="SAICAR_synthetase_CS"/>
</dbReference>
<dbReference type="NCBIfam" id="TIGR00081">
    <property type="entry name" value="purC"/>
    <property type="match status" value="1"/>
</dbReference>
<dbReference type="PANTHER" id="PTHR43599">
    <property type="entry name" value="MULTIFUNCTIONAL PROTEIN ADE2"/>
    <property type="match status" value="1"/>
</dbReference>
<dbReference type="PANTHER" id="PTHR43599:SF3">
    <property type="entry name" value="SI:DKEY-6E2.2"/>
    <property type="match status" value="1"/>
</dbReference>
<dbReference type="Pfam" id="PF01259">
    <property type="entry name" value="SAICAR_synt"/>
    <property type="match status" value="1"/>
</dbReference>
<dbReference type="SUPFAM" id="SSF56104">
    <property type="entry name" value="SAICAR synthase-like"/>
    <property type="match status" value="1"/>
</dbReference>
<dbReference type="PROSITE" id="PS01057">
    <property type="entry name" value="SAICAR_SYNTHETASE_1"/>
    <property type="match status" value="1"/>
</dbReference>
<dbReference type="PROSITE" id="PS01058">
    <property type="entry name" value="SAICAR_SYNTHETASE_2"/>
    <property type="match status" value="1"/>
</dbReference>
<sequence>MARRRQIYEGKAKILYEGPEPGTLIQYFKDDATAFNAQKRGTINGKGVLNNRISEHVFTLLGNIGVPTHFIRRLNMREQLIRQVEIVPIEVIVRNVAAGTLSKRLGIEEGTQLPRTLIEYCYKDDALGDPLVAEEHIACFNWCSQDELHDIQDMAIRINDFMSGMFAAVGIRLVDFKLEFGRLYEGDFSRIILADEISPDGCRLWDMTTNEKLDKDRFRRDLGGEVEAYQEVARRLGLLPEGGDNAVLDLESHRKKKG</sequence>
<accession>Q1GVL7</accession>
<name>PUR7_SPHAL</name>
<keyword id="KW-0067">ATP-binding</keyword>
<keyword id="KW-0436">Ligase</keyword>
<keyword id="KW-0547">Nucleotide-binding</keyword>
<keyword id="KW-0658">Purine biosynthesis</keyword>
<keyword id="KW-1185">Reference proteome</keyword>
<gene>
    <name evidence="1" type="primary">purC</name>
    <name type="ordered locus">Sala_0584</name>
</gene>
<protein>
    <recommendedName>
        <fullName evidence="1">Phosphoribosylaminoimidazole-succinocarboxamide synthase</fullName>
        <ecNumber evidence="1">6.3.2.6</ecNumber>
    </recommendedName>
    <alternativeName>
        <fullName evidence="1">SAICAR synthetase</fullName>
    </alternativeName>
</protein>
<evidence type="ECO:0000255" key="1">
    <source>
        <dbReference type="HAMAP-Rule" id="MF_00137"/>
    </source>
</evidence>
<feature type="chain" id="PRO_1000018784" description="Phosphoribosylaminoimidazole-succinocarboxamide synthase">
    <location>
        <begin position="1"/>
        <end position="258"/>
    </location>
</feature>
<proteinExistence type="inferred from homology"/>
<comment type="catalytic activity">
    <reaction evidence="1">
        <text>5-amino-1-(5-phospho-D-ribosyl)imidazole-4-carboxylate + L-aspartate + ATP = (2S)-2-[5-amino-1-(5-phospho-beta-D-ribosyl)imidazole-4-carboxamido]succinate + ADP + phosphate + 2 H(+)</text>
        <dbReference type="Rhea" id="RHEA:22628"/>
        <dbReference type="ChEBI" id="CHEBI:15378"/>
        <dbReference type="ChEBI" id="CHEBI:29991"/>
        <dbReference type="ChEBI" id="CHEBI:30616"/>
        <dbReference type="ChEBI" id="CHEBI:43474"/>
        <dbReference type="ChEBI" id="CHEBI:58443"/>
        <dbReference type="ChEBI" id="CHEBI:77657"/>
        <dbReference type="ChEBI" id="CHEBI:456216"/>
        <dbReference type="EC" id="6.3.2.6"/>
    </reaction>
</comment>
<comment type="pathway">
    <text evidence="1">Purine metabolism; IMP biosynthesis via de novo pathway; 5-amino-1-(5-phospho-D-ribosyl)imidazole-4-carboxamide from 5-amino-1-(5-phospho-D-ribosyl)imidazole-4-carboxylate: step 1/2.</text>
</comment>
<comment type="similarity">
    <text evidence="1">Belongs to the SAICAR synthetase family.</text>
</comment>